<gene>
    <name evidence="1" type="primary">purC</name>
    <name type="ordered locus">SUB0025</name>
</gene>
<sequence>MSNQLIYTGKAKDIYTTEDEHVIKSVYKDQATMLNGARKETIVGKGVLNNKISSLIFEKLNEAGVATHFIKKLSDTEQLNKKVDIIPLEVVLRNVTAGSFAKRFGIVEGILLDTPIVEFYYKKDELDDPFINDEHVLFLKIADEKQIAYIKEETLRINQLLKGWFQQIDLQLIDFKLEFGFDKDGNIILADEFSPDNCRLWDKDGNHMDKDVFRRDLGNLTAVYQIVLEKLEQL</sequence>
<accession>B9DSR1</accession>
<name>PUR7_STRU0</name>
<protein>
    <recommendedName>
        <fullName evidence="1">Phosphoribosylaminoimidazole-succinocarboxamide synthase</fullName>
        <ecNumber evidence="1">6.3.2.6</ecNumber>
    </recommendedName>
    <alternativeName>
        <fullName evidence="1">SAICAR synthetase</fullName>
    </alternativeName>
</protein>
<keyword id="KW-0067">ATP-binding</keyword>
<keyword id="KW-0436">Ligase</keyword>
<keyword id="KW-0547">Nucleotide-binding</keyword>
<keyword id="KW-0658">Purine biosynthesis</keyword>
<keyword id="KW-1185">Reference proteome</keyword>
<feature type="chain" id="PRO_1000122934" description="Phosphoribosylaminoimidazole-succinocarboxamide synthase">
    <location>
        <begin position="1"/>
        <end position="234"/>
    </location>
</feature>
<organism>
    <name type="scientific">Streptococcus uberis (strain ATCC BAA-854 / 0140J)</name>
    <dbReference type="NCBI Taxonomy" id="218495"/>
    <lineage>
        <taxon>Bacteria</taxon>
        <taxon>Bacillati</taxon>
        <taxon>Bacillota</taxon>
        <taxon>Bacilli</taxon>
        <taxon>Lactobacillales</taxon>
        <taxon>Streptococcaceae</taxon>
        <taxon>Streptococcus</taxon>
    </lineage>
</organism>
<proteinExistence type="inferred from homology"/>
<dbReference type="EC" id="6.3.2.6" evidence="1"/>
<dbReference type="EMBL" id="AM946015">
    <property type="protein sequence ID" value="CAR40361.1"/>
    <property type="molecule type" value="Genomic_DNA"/>
</dbReference>
<dbReference type="RefSeq" id="WP_012657595.1">
    <property type="nucleotide sequence ID" value="NC_012004.1"/>
</dbReference>
<dbReference type="SMR" id="B9DSR1"/>
<dbReference type="STRING" id="218495.SUB0025"/>
<dbReference type="KEGG" id="sub:SUB0025"/>
<dbReference type="eggNOG" id="COG0152">
    <property type="taxonomic scope" value="Bacteria"/>
</dbReference>
<dbReference type="HOGENOM" id="CLU_061495_2_0_9"/>
<dbReference type="OrthoDB" id="9801549at2"/>
<dbReference type="UniPathway" id="UPA00074">
    <property type="reaction ID" value="UER00131"/>
</dbReference>
<dbReference type="Proteomes" id="UP000000449">
    <property type="component" value="Chromosome"/>
</dbReference>
<dbReference type="GO" id="GO:0005524">
    <property type="term" value="F:ATP binding"/>
    <property type="evidence" value="ECO:0007669"/>
    <property type="project" value="UniProtKB-KW"/>
</dbReference>
<dbReference type="GO" id="GO:0004639">
    <property type="term" value="F:phosphoribosylaminoimidazolesuccinocarboxamide synthase activity"/>
    <property type="evidence" value="ECO:0007669"/>
    <property type="project" value="UniProtKB-UniRule"/>
</dbReference>
<dbReference type="GO" id="GO:0006189">
    <property type="term" value="P:'de novo' IMP biosynthetic process"/>
    <property type="evidence" value="ECO:0007669"/>
    <property type="project" value="UniProtKB-UniRule"/>
</dbReference>
<dbReference type="GO" id="GO:0009236">
    <property type="term" value="P:cobalamin biosynthetic process"/>
    <property type="evidence" value="ECO:0007669"/>
    <property type="project" value="InterPro"/>
</dbReference>
<dbReference type="CDD" id="cd01415">
    <property type="entry name" value="SAICAR_synt_PurC"/>
    <property type="match status" value="1"/>
</dbReference>
<dbReference type="FunFam" id="3.30.470.20:FF:000006">
    <property type="entry name" value="Phosphoribosylaminoimidazole-succinocarboxamide synthase"/>
    <property type="match status" value="1"/>
</dbReference>
<dbReference type="Gene3D" id="3.30.470.20">
    <property type="entry name" value="ATP-grasp fold, B domain"/>
    <property type="match status" value="1"/>
</dbReference>
<dbReference type="Gene3D" id="3.30.200.20">
    <property type="entry name" value="Phosphorylase Kinase, domain 1"/>
    <property type="match status" value="1"/>
</dbReference>
<dbReference type="HAMAP" id="MF_00137">
    <property type="entry name" value="SAICAR_synth"/>
    <property type="match status" value="1"/>
</dbReference>
<dbReference type="InterPro" id="IPR028923">
    <property type="entry name" value="SAICAR_synt/ADE2_N"/>
</dbReference>
<dbReference type="InterPro" id="IPR033934">
    <property type="entry name" value="SAICAR_synt_PurC"/>
</dbReference>
<dbReference type="InterPro" id="IPR001636">
    <property type="entry name" value="SAICAR_synth"/>
</dbReference>
<dbReference type="InterPro" id="IPR050089">
    <property type="entry name" value="SAICAR_synthetase"/>
</dbReference>
<dbReference type="InterPro" id="IPR018236">
    <property type="entry name" value="SAICAR_synthetase_CS"/>
</dbReference>
<dbReference type="NCBIfam" id="TIGR00081">
    <property type="entry name" value="purC"/>
    <property type="match status" value="1"/>
</dbReference>
<dbReference type="PANTHER" id="PTHR43599">
    <property type="entry name" value="MULTIFUNCTIONAL PROTEIN ADE2"/>
    <property type="match status" value="1"/>
</dbReference>
<dbReference type="PANTHER" id="PTHR43599:SF3">
    <property type="entry name" value="SI:DKEY-6E2.2"/>
    <property type="match status" value="1"/>
</dbReference>
<dbReference type="Pfam" id="PF01259">
    <property type="entry name" value="SAICAR_synt"/>
    <property type="match status" value="1"/>
</dbReference>
<dbReference type="SUPFAM" id="SSF56104">
    <property type="entry name" value="SAICAR synthase-like"/>
    <property type="match status" value="1"/>
</dbReference>
<dbReference type="PROSITE" id="PS01057">
    <property type="entry name" value="SAICAR_SYNTHETASE_1"/>
    <property type="match status" value="1"/>
</dbReference>
<dbReference type="PROSITE" id="PS01058">
    <property type="entry name" value="SAICAR_SYNTHETASE_2"/>
    <property type="match status" value="1"/>
</dbReference>
<evidence type="ECO:0000255" key="1">
    <source>
        <dbReference type="HAMAP-Rule" id="MF_00137"/>
    </source>
</evidence>
<comment type="catalytic activity">
    <reaction evidence="1">
        <text>5-amino-1-(5-phospho-D-ribosyl)imidazole-4-carboxylate + L-aspartate + ATP = (2S)-2-[5-amino-1-(5-phospho-beta-D-ribosyl)imidazole-4-carboxamido]succinate + ADP + phosphate + 2 H(+)</text>
        <dbReference type="Rhea" id="RHEA:22628"/>
        <dbReference type="ChEBI" id="CHEBI:15378"/>
        <dbReference type="ChEBI" id="CHEBI:29991"/>
        <dbReference type="ChEBI" id="CHEBI:30616"/>
        <dbReference type="ChEBI" id="CHEBI:43474"/>
        <dbReference type="ChEBI" id="CHEBI:58443"/>
        <dbReference type="ChEBI" id="CHEBI:77657"/>
        <dbReference type="ChEBI" id="CHEBI:456216"/>
        <dbReference type="EC" id="6.3.2.6"/>
    </reaction>
</comment>
<comment type="pathway">
    <text evidence="1">Purine metabolism; IMP biosynthesis via de novo pathway; 5-amino-1-(5-phospho-D-ribosyl)imidazole-4-carboxamide from 5-amino-1-(5-phospho-D-ribosyl)imidazole-4-carboxylate: step 1/2.</text>
</comment>
<comment type="similarity">
    <text evidence="1">Belongs to the SAICAR synthetase family.</text>
</comment>
<reference key="1">
    <citation type="journal article" date="2009" name="BMC Genomics">
        <title>Evidence for niche adaptation in the genome of the bovine pathogen Streptococcus uberis.</title>
        <authorList>
            <person name="Ward P.N."/>
            <person name="Holden M.T.G."/>
            <person name="Leigh J.A."/>
            <person name="Lennard N."/>
            <person name="Bignell A."/>
            <person name="Barron A."/>
            <person name="Clark L."/>
            <person name="Quail M.A."/>
            <person name="Woodward J."/>
            <person name="Barrell B.G."/>
            <person name="Egan S.A."/>
            <person name="Field T.R."/>
            <person name="Maskell D."/>
            <person name="Kehoe M."/>
            <person name="Dowson C.G."/>
            <person name="Chanter N."/>
            <person name="Whatmore A.M."/>
            <person name="Bentley S.D."/>
            <person name="Parkhill J."/>
        </authorList>
    </citation>
    <scope>NUCLEOTIDE SEQUENCE [LARGE SCALE GENOMIC DNA]</scope>
    <source>
        <strain>ATCC BAA-854 / 0140J</strain>
    </source>
</reference>